<keyword id="KW-0028">Amino-acid biosynthesis</keyword>
<keyword id="KW-0963">Cytoplasm</keyword>
<keyword id="KW-0368">Histidine biosynthesis</keyword>
<keyword id="KW-0456">Lyase</keyword>
<keyword id="KW-1185">Reference proteome</keyword>
<dbReference type="EC" id="4.3.2.10" evidence="1"/>
<dbReference type="EMBL" id="AP009256">
    <property type="protein sequence ID" value="BAF39568.1"/>
    <property type="molecule type" value="Genomic_DNA"/>
</dbReference>
<dbReference type="RefSeq" id="WP_003809320.1">
    <property type="nucleotide sequence ID" value="NC_008618.1"/>
</dbReference>
<dbReference type="SMR" id="A1A1I5"/>
<dbReference type="STRING" id="367928.BAD_0787"/>
<dbReference type="PaxDb" id="1680-BADO_0836"/>
<dbReference type="GeneID" id="45582893"/>
<dbReference type="KEGG" id="bad:BAD_0787"/>
<dbReference type="HOGENOM" id="CLU_048577_4_0_11"/>
<dbReference type="UniPathway" id="UPA00031">
    <property type="reaction ID" value="UER00010"/>
</dbReference>
<dbReference type="Proteomes" id="UP000008702">
    <property type="component" value="Chromosome"/>
</dbReference>
<dbReference type="GO" id="GO:0005737">
    <property type="term" value="C:cytoplasm"/>
    <property type="evidence" value="ECO:0007669"/>
    <property type="project" value="UniProtKB-SubCell"/>
</dbReference>
<dbReference type="GO" id="GO:0000107">
    <property type="term" value="F:imidazoleglycerol-phosphate synthase activity"/>
    <property type="evidence" value="ECO:0007669"/>
    <property type="project" value="UniProtKB-UniRule"/>
</dbReference>
<dbReference type="GO" id="GO:0016829">
    <property type="term" value="F:lyase activity"/>
    <property type="evidence" value="ECO:0007669"/>
    <property type="project" value="UniProtKB-KW"/>
</dbReference>
<dbReference type="GO" id="GO:0000105">
    <property type="term" value="P:L-histidine biosynthetic process"/>
    <property type="evidence" value="ECO:0007669"/>
    <property type="project" value="UniProtKB-UniRule"/>
</dbReference>
<dbReference type="CDD" id="cd04731">
    <property type="entry name" value="HisF"/>
    <property type="match status" value="1"/>
</dbReference>
<dbReference type="FunFam" id="3.20.20.70:FF:000006">
    <property type="entry name" value="Imidazole glycerol phosphate synthase subunit HisF"/>
    <property type="match status" value="1"/>
</dbReference>
<dbReference type="Gene3D" id="3.20.20.70">
    <property type="entry name" value="Aldolase class I"/>
    <property type="match status" value="1"/>
</dbReference>
<dbReference type="HAMAP" id="MF_01013">
    <property type="entry name" value="HisF"/>
    <property type="match status" value="1"/>
</dbReference>
<dbReference type="InterPro" id="IPR013785">
    <property type="entry name" value="Aldolase_TIM"/>
</dbReference>
<dbReference type="InterPro" id="IPR006062">
    <property type="entry name" value="His_biosynth"/>
</dbReference>
<dbReference type="InterPro" id="IPR004651">
    <property type="entry name" value="HisF"/>
</dbReference>
<dbReference type="InterPro" id="IPR050064">
    <property type="entry name" value="IGPS_HisA/HisF"/>
</dbReference>
<dbReference type="InterPro" id="IPR011060">
    <property type="entry name" value="RibuloseP-bd_barrel"/>
</dbReference>
<dbReference type="NCBIfam" id="TIGR00735">
    <property type="entry name" value="hisF"/>
    <property type="match status" value="1"/>
</dbReference>
<dbReference type="PANTHER" id="PTHR21235:SF2">
    <property type="entry name" value="IMIDAZOLE GLYCEROL PHOSPHATE SYNTHASE HISHF"/>
    <property type="match status" value="1"/>
</dbReference>
<dbReference type="PANTHER" id="PTHR21235">
    <property type="entry name" value="IMIDAZOLE GLYCEROL PHOSPHATE SYNTHASE SUBUNIT HISF/H IGP SYNTHASE SUBUNIT HISF/H"/>
    <property type="match status" value="1"/>
</dbReference>
<dbReference type="Pfam" id="PF00977">
    <property type="entry name" value="His_biosynth"/>
    <property type="match status" value="1"/>
</dbReference>
<dbReference type="SUPFAM" id="SSF51366">
    <property type="entry name" value="Ribulose-phoshate binding barrel"/>
    <property type="match status" value="1"/>
</dbReference>
<organism>
    <name type="scientific">Bifidobacterium adolescentis (strain ATCC 15703 / DSM 20083 / NCTC 11814 / E194a)</name>
    <dbReference type="NCBI Taxonomy" id="367928"/>
    <lineage>
        <taxon>Bacteria</taxon>
        <taxon>Bacillati</taxon>
        <taxon>Actinomycetota</taxon>
        <taxon>Actinomycetes</taxon>
        <taxon>Bifidobacteriales</taxon>
        <taxon>Bifidobacteriaceae</taxon>
        <taxon>Bifidobacterium</taxon>
    </lineage>
</organism>
<protein>
    <recommendedName>
        <fullName evidence="1">Imidazole glycerol phosphate synthase subunit HisF</fullName>
        <ecNumber evidence="1">4.3.2.10</ecNumber>
    </recommendedName>
    <alternativeName>
        <fullName evidence="1">IGP synthase cyclase subunit</fullName>
    </alternativeName>
    <alternativeName>
        <fullName evidence="1">IGP synthase subunit HisF</fullName>
    </alternativeName>
    <alternativeName>
        <fullName evidence="1">ImGP synthase subunit HisF</fullName>
        <shortName evidence="1">IGPS subunit HisF</shortName>
    </alternativeName>
</protein>
<name>HIS6_BIFAA</name>
<comment type="function">
    <text evidence="1">IGPS catalyzes the conversion of PRFAR and glutamine to IGP, AICAR and glutamate. The HisF subunit catalyzes the cyclization activity that produces IGP and AICAR from PRFAR using the ammonia provided by the HisH subunit.</text>
</comment>
<comment type="catalytic activity">
    <reaction evidence="1">
        <text>5-[(5-phospho-1-deoxy-D-ribulos-1-ylimino)methylamino]-1-(5-phospho-beta-D-ribosyl)imidazole-4-carboxamide + L-glutamine = D-erythro-1-(imidazol-4-yl)glycerol 3-phosphate + 5-amino-1-(5-phospho-beta-D-ribosyl)imidazole-4-carboxamide + L-glutamate + H(+)</text>
        <dbReference type="Rhea" id="RHEA:24793"/>
        <dbReference type="ChEBI" id="CHEBI:15378"/>
        <dbReference type="ChEBI" id="CHEBI:29985"/>
        <dbReference type="ChEBI" id="CHEBI:58278"/>
        <dbReference type="ChEBI" id="CHEBI:58359"/>
        <dbReference type="ChEBI" id="CHEBI:58475"/>
        <dbReference type="ChEBI" id="CHEBI:58525"/>
        <dbReference type="EC" id="4.3.2.10"/>
    </reaction>
</comment>
<comment type="pathway">
    <text evidence="1">Amino-acid biosynthesis; L-histidine biosynthesis; L-histidine from 5-phospho-alpha-D-ribose 1-diphosphate: step 5/9.</text>
</comment>
<comment type="subunit">
    <text evidence="1">Heterodimer of HisH and HisF.</text>
</comment>
<comment type="subcellular location">
    <subcellularLocation>
        <location evidence="1">Cytoplasm</location>
    </subcellularLocation>
</comment>
<comment type="similarity">
    <text evidence="1">Belongs to the HisA/HisF family.</text>
</comment>
<proteinExistence type="inferred from homology"/>
<reference key="1">
    <citation type="submission" date="2006-12" db="EMBL/GenBank/DDBJ databases">
        <title>Bifidobacterium adolescentis complete genome sequence.</title>
        <authorList>
            <person name="Suzuki T."/>
            <person name="Tsuda Y."/>
            <person name="Kanou N."/>
            <person name="Inoue T."/>
            <person name="Kumazaki K."/>
            <person name="Nagano S."/>
            <person name="Hirai S."/>
            <person name="Tanaka K."/>
            <person name="Watanabe K."/>
        </authorList>
    </citation>
    <scope>NUCLEOTIDE SEQUENCE [LARGE SCALE GENOMIC DNA]</scope>
    <source>
        <strain>ATCC 15703 / DSM 20083 / NCTC 11814 / E194a</strain>
    </source>
</reference>
<feature type="chain" id="PRO_1000063030" description="Imidazole glycerol phosphate synthase subunit HisF">
    <location>
        <begin position="1"/>
        <end position="256"/>
    </location>
</feature>
<feature type="active site" evidence="1">
    <location>
        <position position="12"/>
    </location>
</feature>
<feature type="active site" evidence="1">
    <location>
        <position position="131"/>
    </location>
</feature>
<evidence type="ECO:0000255" key="1">
    <source>
        <dbReference type="HAMAP-Rule" id="MF_01013"/>
    </source>
</evidence>
<gene>
    <name evidence="1" type="primary">hisF</name>
    <name type="ordered locus">BAD_0787</name>
</gene>
<sequence>MSLAVRVIPCLDVDAGRVVKGVHFENLRDAGDPVELAAEYYRQGADELTFLDVTASSSHRQTMVDVVSRTAEQIFIPLTVGGGVRTPEDVDSLLRCGADKVGVNTAAINDPTLISRVAERFGNQVLVLSVDARREQGERHTQSGFEVTTMGGRKSTGIDAIWWVKRAQELGAGEILLNSMDADGTQQGFDLEMIKAVRKEVKIPIIASGGAGKASDFPPAIEAGADAVLAASIFHYGKVTIGEVKDAIKAAGYTVR</sequence>
<accession>A1A1I5</accession>